<dbReference type="EC" id="3.4.21.-"/>
<dbReference type="EMBL" id="X67043">
    <property type="protein sequence ID" value="CAA47428.1"/>
    <property type="status" value="ALT_SEQ"/>
    <property type="molecule type" value="Genomic_DNA"/>
</dbReference>
<dbReference type="PIR" id="S26691">
    <property type="entry name" value="S26691"/>
</dbReference>
<dbReference type="SMR" id="P31339"/>
<dbReference type="STRING" id="1233098.GCA_000315855_04211"/>
<dbReference type="GO" id="GO:0005737">
    <property type="term" value="C:cytoplasm"/>
    <property type="evidence" value="ECO:0007669"/>
    <property type="project" value="UniProtKB-ARBA"/>
</dbReference>
<dbReference type="GO" id="GO:0012505">
    <property type="term" value="C:endomembrane system"/>
    <property type="evidence" value="ECO:0007669"/>
    <property type="project" value="UniProtKB-ARBA"/>
</dbReference>
<dbReference type="GO" id="GO:0043231">
    <property type="term" value="C:intracellular membrane-bounded organelle"/>
    <property type="evidence" value="ECO:0007669"/>
    <property type="project" value="UniProtKB-ARBA"/>
</dbReference>
<dbReference type="GO" id="GO:0016020">
    <property type="term" value="C:membrane"/>
    <property type="evidence" value="ECO:0007669"/>
    <property type="project" value="TreeGrafter"/>
</dbReference>
<dbReference type="GO" id="GO:0004252">
    <property type="term" value="F:serine-type endopeptidase activity"/>
    <property type="evidence" value="ECO:0007669"/>
    <property type="project" value="InterPro"/>
</dbReference>
<dbReference type="GO" id="GO:0016485">
    <property type="term" value="P:protein processing"/>
    <property type="evidence" value="ECO:0007669"/>
    <property type="project" value="TreeGrafter"/>
</dbReference>
<dbReference type="Gene3D" id="2.60.120.260">
    <property type="entry name" value="Galactose-binding domain-like"/>
    <property type="match status" value="1"/>
</dbReference>
<dbReference type="Gene3D" id="3.40.50.200">
    <property type="entry name" value="Peptidase S8/S53 domain"/>
    <property type="match status" value="1"/>
</dbReference>
<dbReference type="InterPro" id="IPR008979">
    <property type="entry name" value="Galactose-bd-like_sf"/>
</dbReference>
<dbReference type="InterPro" id="IPR002884">
    <property type="entry name" value="P_dom"/>
</dbReference>
<dbReference type="InterPro" id="IPR000209">
    <property type="entry name" value="Peptidase_S8/S53_dom"/>
</dbReference>
<dbReference type="InterPro" id="IPR036852">
    <property type="entry name" value="Peptidase_S8/S53_dom_sf"/>
</dbReference>
<dbReference type="InterPro" id="IPR023827">
    <property type="entry name" value="Peptidase_S8_Asp-AS"/>
</dbReference>
<dbReference type="InterPro" id="IPR023828">
    <property type="entry name" value="Peptidase_S8_Ser-AS"/>
</dbReference>
<dbReference type="InterPro" id="IPR015500">
    <property type="entry name" value="Peptidase_S8_subtilisin-rel"/>
</dbReference>
<dbReference type="PANTHER" id="PTHR42884:SF14">
    <property type="entry name" value="NEUROENDOCRINE CONVERTASE 1"/>
    <property type="match status" value="1"/>
</dbReference>
<dbReference type="PANTHER" id="PTHR42884">
    <property type="entry name" value="PROPROTEIN CONVERTASE SUBTILISIN/KEXIN-RELATED"/>
    <property type="match status" value="1"/>
</dbReference>
<dbReference type="Pfam" id="PF01483">
    <property type="entry name" value="P_proprotein"/>
    <property type="match status" value="1"/>
</dbReference>
<dbReference type="Pfam" id="PF00082">
    <property type="entry name" value="Peptidase_S8"/>
    <property type="match status" value="1"/>
</dbReference>
<dbReference type="PRINTS" id="PR00723">
    <property type="entry name" value="SUBTILISIN"/>
</dbReference>
<dbReference type="SUPFAM" id="SSF49785">
    <property type="entry name" value="Galactose-binding domain-like"/>
    <property type="match status" value="1"/>
</dbReference>
<dbReference type="SUPFAM" id="SSF52743">
    <property type="entry name" value="Subtilisin-like"/>
    <property type="match status" value="1"/>
</dbReference>
<dbReference type="PROSITE" id="PS51829">
    <property type="entry name" value="P_HOMO_B"/>
    <property type="match status" value="1"/>
</dbReference>
<dbReference type="PROSITE" id="PS51892">
    <property type="entry name" value="SUBTILASE"/>
    <property type="match status" value="1"/>
</dbReference>
<dbReference type="PROSITE" id="PS00136">
    <property type="entry name" value="SUBTILASE_ASP"/>
    <property type="match status" value="1"/>
</dbReference>
<dbReference type="PROSITE" id="PS00138">
    <property type="entry name" value="SUBTILASE_SER"/>
    <property type="match status" value="1"/>
</dbReference>
<comment type="function">
    <text>Agent of furonculosis.</text>
</comment>
<comment type="similarity">
    <text evidence="5">Belongs to the peptidase S8 family.</text>
</comment>
<protein>
    <recommendedName>
        <fullName>Microbial serine proteinase</fullName>
        <ecNumber>3.4.21.-</ecNumber>
    </recommendedName>
</protein>
<feature type="signal peptide" evidence="1">
    <location>
        <begin position="1"/>
        <end position="24"/>
    </location>
</feature>
<feature type="chain" id="PRO_0000026995" description="Microbial serine proteinase">
    <location>
        <begin position="25"/>
        <end position="621"/>
    </location>
</feature>
<feature type="domain" description="Peptidase S8" evidence="3">
    <location>
        <begin position="68"/>
        <end position="440"/>
    </location>
</feature>
<feature type="domain" description="P/Homo B" evidence="2">
    <location>
        <begin position="454"/>
        <end position="619"/>
    </location>
</feature>
<feature type="region of interest" description="Disordered" evidence="4">
    <location>
        <begin position="114"/>
        <end position="133"/>
    </location>
</feature>
<feature type="region of interest" description="Disordered" evidence="4">
    <location>
        <begin position="457"/>
        <end position="485"/>
    </location>
</feature>
<feature type="compositionally biased region" description="Polar residues" evidence="4">
    <location>
        <begin position="465"/>
        <end position="485"/>
    </location>
</feature>
<feature type="active site" description="Charge relay system" evidence="3">
    <location>
        <position position="98"/>
    </location>
</feature>
<feature type="active site" description="Charge relay system" evidence="3">
    <location>
        <position position="137"/>
    </location>
</feature>
<feature type="active site" description="Charge relay system" evidence="3">
    <location>
        <position position="354"/>
    </location>
</feature>
<reference key="1">
    <citation type="journal article" date="1992" name="FEMS Microbiol. Lett.">
        <title>The cloning and nucleotide sequence of the serine protease gene (aspA) of Aeromonas salmonicida ssp. salmonicida.</title>
        <authorList>
            <person name="Whitby P.W."/>
            <person name="Landon M."/>
            <person name="Coleman G."/>
        </authorList>
    </citation>
    <scope>NUCLEOTIDE SEQUENCE [GENOMIC DNA]</scope>
    <scope>PROTEIN SEQUENCE OF 25-30; 322-339 AND 368-386</scope>
    <source>
        <strain>MT0004 / U2862</strain>
    </source>
</reference>
<accession>P31339</accession>
<sequence>MRKTSLALAISALLSALPIASVQANESCTPLTGKEAGLDTGRSSAVRCLPGINPLQDLLNSGQNAFSPRGGMAGNDLNLWWAHRTEVLGQGINVAVVDDGLAIAHPDLADNVRPGSKNVVTGGSDPTPTDPDRCPRHSVSGIIAAVDNSIGTLGVAPRVQLQGFNLLDDNIQQLQKDWLYALGQRRHRRQPGLQPELRMSLVDPEGANGLDQVQLDRLFEQRTQHASAAYIKAAGTAFSRIAAGNYVAQPHRNLPKLPFENSNIDPSNSNFWNLVVRAINADGVRSSYSSVGSNVFLSAPGGEYGTDAPAMVTTDLPGCDMGYNRVDDPSTNRLHNNPQLDASCDYNGVMNGTSSATPNTTGAMVLMAPYPDLSVRDLRDLLARNATRLDANQGPVQINYTAANGERRQVTGLEGWERNAAGLWYSPSYGFGLVDVNKTQPCSRQPRTAATTGAVALAKGKGNGRSPSAPSRYVGSSPTRSSTQVDQPLTVEAVQVMVSLDHQRLPDLLIELVSPSGTRSVLLNPNNSLVGQSLDRQQLGYVRTKGLRDMRMLSHKFYGEPAHGEWRLEVTDVANAAAQVSLLDRRTNTRSTLTEGNNSQPGQLLDWSRGYSVLGHDAARS</sequence>
<evidence type="ECO:0000255" key="1"/>
<evidence type="ECO:0000255" key="2">
    <source>
        <dbReference type="PROSITE-ProRule" id="PRU01173"/>
    </source>
</evidence>
<evidence type="ECO:0000255" key="3">
    <source>
        <dbReference type="PROSITE-ProRule" id="PRU01240"/>
    </source>
</evidence>
<evidence type="ECO:0000256" key="4">
    <source>
        <dbReference type="SAM" id="MobiDB-lite"/>
    </source>
</evidence>
<evidence type="ECO:0000305" key="5"/>
<gene>
    <name type="primary">aspA</name>
</gene>
<organism>
    <name type="scientific">Aeromonas salmonicida</name>
    <dbReference type="NCBI Taxonomy" id="645"/>
    <lineage>
        <taxon>Bacteria</taxon>
        <taxon>Pseudomonadati</taxon>
        <taxon>Pseudomonadota</taxon>
        <taxon>Gammaproteobacteria</taxon>
        <taxon>Aeromonadales</taxon>
        <taxon>Aeromonadaceae</taxon>
        <taxon>Aeromonas</taxon>
    </lineage>
</organism>
<proteinExistence type="evidence at protein level"/>
<keyword id="KW-0903">Direct protein sequencing</keyword>
<keyword id="KW-0378">Hydrolase</keyword>
<keyword id="KW-0645">Protease</keyword>
<keyword id="KW-0720">Serine protease</keyword>
<keyword id="KW-0732">Signal</keyword>
<name>ASPA_AERSA</name>